<dbReference type="EC" id="3.1.4.35" evidence="2"/>
<dbReference type="EMBL" id="X12756">
    <property type="protein sequence ID" value="CAA31243.1"/>
    <property type="molecule type" value="mRNA"/>
</dbReference>
<dbReference type="EMBL" id="M27541">
    <property type="protein sequence ID" value="AAA30441.1"/>
    <property type="molecule type" value="mRNA"/>
</dbReference>
<dbReference type="EMBL" id="M36683">
    <property type="protein sequence ID" value="AAA30442.1"/>
    <property type="molecule type" value="mRNA"/>
</dbReference>
<dbReference type="EMBL" id="M26043">
    <property type="protein sequence ID" value="AAA30443.1"/>
    <property type="molecule type" value="mRNA"/>
</dbReference>
<dbReference type="PIR" id="S06418">
    <property type="entry name" value="S06418"/>
</dbReference>
<dbReference type="RefSeq" id="NP_001001526.2">
    <property type="nucleotide sequence ID" value="NM_001001526.2"/>
</dbReference>
<dbReference type="PDB" id="6MZB">
    <property type="method" value="EM"/>
    <property type="resolution" value="3.40 A"/>
    <property type="chains" value="A=1-859"/>
</dbReference>
<dbReference type="PDB" id="7JSN">
    <property type="method" value="EM"/>
    <property type="resolution" value="3.20 A"/>
    <property type="chains" value="A=1-859"/>
</dbReference>
<dbReference type="PDB" id="8UFI">
    <property type="method" value="EM"/>
    <property type="resolution" value="3.10 A"/>
    <property type="chains" value="A=1-859"/>
</dbReference>
<dbReference type="PDB" id="8UGB">
    <property type="method" value="EM"/>
    <property type="resolution" value="3.00 A"/>
    <property type="chains" value="A=1-859"/>
</dbReference>
<dbReference type="PDB" id="8UGS">
    <property type="method" value="EM"/>
    <property type="resolution" value="3.20 A"/>
    <property type="chains" value="A=1-859"/>
</dbReference>
<dbReference type="PDB" id="8ULG">
    <property type="method" value="EM"/>
    <property type="resolution" value="3.20 A"/>
    <property type="chains" value="A=1-859"/>
</dbReference>
<dbReference type="PDBsum" id="6MZB"/>
<dbReference type="PDBsum" id="7JSN"/>
<dbReference type="PDBsum" id="8UFI"/>
<dbReference type="PDBsum" id="8UGB"/>
<dbReference type="PDBsum" id="8UGS"/>
<dbReference type="PDBsum" id="8ULG"/>
<dbReference type="EMDB" id="EMD-22458"/>
<dbReference type="EMDB" id="EMD-42208"/>
<dbReference type="EMDB" id="EMD-42220"/>
<dbReference type="EMDB" id="EMD-42234"/>
<dbReference type="EMDB" id="EMD-42358"/>
<dbReference type="EMDB" id="EMD-9297"/>
<dbReference type="SMR" id="P11541"/>
<dbReference type="CORUM" id="P11541"/>
<dbReference type="FunCoup" id="P11541">
    <property type="interactions" value="45"/>
</dbReference>
<dbReference type="IntAct" id="P11541">
    <property type="interactions" value="2"/>
</dbReference>
<dbReference type="MINT" id="P11541"/>
<dbReference type="STRING" id="9913.ENSBTAP00000036518"/>
<dbReference type="BindingDB" id="P11541"/>
<dbReference type="ChEMBL" id="CHEMBL3741"/>
<dbReference type="DrugCentral" id="P11541"/>
<dbReference type="iPTMnet" id="P11541"/>
<dbReference type="PaxDb" id="9913-ENSBTAP00000036518"/>
<dbReference type="GeneID" id="281973"/>
<dbReference type="KEGG" id="bta:281973"/>
<dbReference type="CTD" id="5145"/>
<dbReference type="eggNOG" id="KOG3689">
    <property type="taxonomic scope" value="Eukaryota"/>
</dbReference>
<dbReference type="InParanoid" id="P11541"/>
<dbReference type="OrthoDB" id="546632at2759"/>
<dbReference type="PRO" id="PR:P11541"/>
<dbReference type="Proteomes" id="UP000009136">
    <property type="component" value="Unplaced"/>
</dbReference>
<dbReference type="GO" id="GO:0097381">
    <property type="term" value="C:photoreceptor disc membrane"/>
    <property type="evidence" value="ECO:0000304"/>
    <property type="project" value="Reactome"/>
</dbReference>
<dbReference type="GO" id="GO:0042622">
    <property type="term" value="C:photoreceptor outer segment membrane"/>
    <property type="evidence" value="ECO:0000314"/>
    <property type="project" value="CAFA"/>
</dbReference>
<dbReference type="GO" id="GO:0004115">
    <property type="term" value="F:3',5'-cyclic-AMP phosphodiesterase activity"/>
    <property type="evidence" value="ECO:0000318"/>
    <property type="project" value="GO_Central"/>
</dbReference>
<dbReference type="GO" id="GO:0047555">
    <property type="term" value="F:3',5'-cyclic-GMP phosphodiesterase activity"/>
    <property type="evidence" value="ECO:0000318"/>
    <property type="project" value="GO_Central"/>
</dbReference>
<dbReference type="GO" id="GO:0046872">
    <property type="term" value="F:metal ion binding"/>
    <property type="evidence" value="ECO:0007669"/>
    <property type="project" value="UniProtKB-KW"/>
</dbReference>
<dbReference type="GO" id="GO:0019933">
    <property type="term" value="P:cAMP-mediated signaling"/>
    <property type="evidence" value="ECO:0000318"/>
    <property type="project" value="GO_Central"/>
</dbReference>
<dbReference type="GO" id="GO:0060041">
    <property type="term" value="P:retina development in camera-type eye"/>
    <property type="evidence" value="ECO:0000318"/>
    <property type="project" value="GO_Central"/>
</dbReference>
<dbReference type="GO" id="GO:0007601">
    <property type="term" value="P:visual perception"/>
    <property type="evidence" value="ECO:0007669"/>
    <property type="project" value="UniProtKB-KW"/>
</dbReference>
<dbReference type="CDD" id="cd00077">
    <property type="entry name" value="HDc"/>
    <property type="match status" value="1"/>
</dbReference>
<dbReference type="FunFam" id="1.10.1300.10:FF:000005">
    <property type="entry name" value="Phosphodiesterase"/>
    <property type="match status" value="1"/>
</dbReference>
<dbReference type="FunFam" id="3.30.450.40:FF:000001">
    <property type="entry name" value="Phosphodiesterase"/>
    <property type="match status" value="1"/>
</dbReference>
<dbReference type="FunFam" id="3.30.450.40:FF:000010">
    <property type="entry name" value="Phosphodiesterase"/>
    <property type="match status" value="1"/>
</dbReference>
<dbReference type="Gene3D" id="3.30.450.40">
    <property type="match status" value="2"/>
</dbReference>
<dbReference type="Gene3D" id="1.10.1300.10">
    <property type="entry name" value="3'5'-cyclic nucleotide phosphodiesterase, catalytic domain"/>
    <property type="match status" value="1"/>
</dbReference>
<dbReference type="InterPro" id="IPR003018">
    <property type="entry name" value="GAF"/>
</dbReference>
<dbReference type="InterPro" id="IPR029016">
    <property type="entry name" value="GAF-like_dom_sf"/>
</dbReference>
<dbReference type="InterPro" id="IPR003607">
    <property type="entry name" value="HD/PDEase_dom"/>
</dbReference>
<dbReference type="InterPro" id="IPR023088">
    <property type="entry name" value="PDEase"/>
</dbReference>
<dbReference type="InterPro" id="IPR002073">
    <property type="entry name" value="PDEase_catalytic_dom"/>
</dbReference>
<dbReference type="InterPro" id="IPR036971">
    <property type="entry name" value="PDEase_catalytic_dom_sf"/>
</dbReference>
<dbReference type="InterPro" id="IPR023174">
    <property type="entry name" value="PDEase_CS"/>
</dbReference>
<dbReference type="PANTHER" id="PTHR11347">
    <property type="entry name" value="CYCLIC NUCLEOTIDE PHOSPHODIESTERASE"/>
    <property type="match status" value="1"/>
</dbReference>
<dbReference type="Pfam" id="PF01590">
    <property type="entry name" value="GAF"/>
    <property type="match status" value="2"/>
</dbReference>
<dbReference type="Pfam" id="PF00233">
    <property type="entry name" value="PDEase_I"/>
    <property type="match status" value="1"/>
</dbReference>
<dbReference type="PRINTS" id="PR00387">
    <property type="entry name" value="PDIESTERASE1"/>
</dbReference>
<dbReference type="SMART" id="SM00065">
    <property type="entry name" value="GAF"/>
    <property type="match status" value="2"/>
</dbReference>
<dbReference type="SMART" id="SM00471">
    <property type="entry name" value="HDc"/>
    <property type="match status" value="1"/>
</dbReference>
<dbReference type="SUPFAM" id="SSF55781">
    <property type="entry name" value="GAF domain-like"/>
    <property type="match status" value="2"/>
</dbReference>
<dbReference type="SUPFAM" id="SSF109604">
    <property type="entry name" value="HD-domain/PDEase-like"/>
    <property type="match status" value="1"/>
</dbReference>
<dbReference type="PROSITE" id="PS00126">
    <property type="entry name" value="PDEASE_I_1"/>
    <property type="match status" value="1"/>
</dbReference>
<dbReference type="PROSITE" id="PS51845">
    <property type="entry name" value="PDEASE_I_2"/>
    <property type="match status" value="1"/>
</dbReference>
<feature type="initiator methionine" description="Removed" evidence="5">
    <location>
        <position position="1"/>
    </location>
</feature>
<feature type="chain" id="PRO_0000198826" description="Rod cGMP-specific 3',5'-cyclic phosphodiesterase subunit alpha">
    <location>
        <begin position="2"/>
        <end position="856"/>
    </location>
</feature>
<feature type="propeptide" id="PRO_0000396695" description="Removed in mature form" evidence="1">
    <location>
        <begin position="857"/>
        <end position="859"/>
    </location>
</feature>
<feature type="domain" description="GAF 1">
    <location>
        <begin position="73"/>
        <end position="222"/>
    </location>
</feature>
<feature type="domain" description="GAF 2">
    <location>
        <begin position="254"/>
        <end position="431"/>
    </location>
</feature>
<feature type="domain" description="PDEase" evidence="3">
    <location>
        <begin position="483"/>
        <end position="816"/>
    </location>
</feature>
<feature type="region of interest" description="Disordered" evidence="4">
    <location>
        <begin position="821"/>
        <end position="859"/>
    </location>
</feature>
<feature type="compositionally biased region" description="Low complexity" evidence="4">
    <location>
        <begin position="830"/>
        <end position="840"/>
    </location>
</feature>
<feature type="compositionally biased region" description="Gly residues" evidence="4">
    <location>
        <begin position="841"/>
        <end position="851"/>
    </location>
</feature>
<feature type="active site" description="Proton donor" evidence="1">
    <location>
        <position position="559"/>
    </location>
</feature>
<feature type="binding site" evidence="1">
    <location>
        <position position="563"/>
    </location>
    <ligand>
        <name>a divalent metal cation</name>
        <dbReference type="ChEBI" id="CHEBI:60240"/>
        <label>1</label>
    </ligand>
</feature>
<feature type="binding site" evidence="1">
    <location>
        <position position="599"/>
    </location>
    <ligand>
        <name>a divalent metal cation</name>
        <dbReference type="ChEBI" id="CHEBI:60240"/>
        <label>1</label>
    </ligand>
</feature>
<feature type="binding site" evidence="1">
    <location>
        <position position="600"/>
    </location>
    <ligand>
        <name>a divalent metal cation</name>
        <dbReference type="ChEBI" id="CHEBI:60240"/>
        <label>1</label>
    </ligand>
</feature>
<feature type="binding site" evidence="1">
    <location>
        <position position="600"/>
    </location>
    <ligand>
        <name>a divalent metal cation</name>
        <dbReference type="ChEBI" id="CHEBI:60240"/>
        <label>2</label>
    </ligand>
</feature>
<feature type="binding site" evidence="1">
    <location>
        <position position="720"/>
    </location>
    <ligand>
        <name>a divalent metal cation</name>
        <dbReference type="ChEBI" id="CHEBI:60240"/>
        <label>1</label>
    </ligand>
</feature>
<feature type="modified residue" description="N-acetylglycine" evidence="5">
    <location>
        <position position="2"/>
    </location>
</feature>
<feature type="modified residue" description="Cysteine methyl ester" evidence="1">
    <location>
        <position position="856"/>
    </location>
</feature>
<feature type="lipid moiety-binding region" description="S-farnesyl cysteine" evidence="1">
    <location>
        <position position="856"/>
    </location>
</feature>
<feature type="sequence variant">
    <original>M</original>
    <variation>V</variation>
    <location>
        <position position="381"/>
    </location>
</feature>
<feature type="sequence conflict" description="In Ref. 2 and 3." evidence="6" ref="2 3">
    <original>V</original>
    <variation>A</variation>
    <location>
        <position position="194"/>
    </location>
</feature>
<feature type="sequence conflict" description="In Ref. 2 and 3." evidence="6" ref="2 3">
    <original>T</original>
    <variation>A</variation>
    <location>
        <position position="424"/>
    </location>
</feature>
<feature type="sequence conflict" description="In Ref. 2 and 3." evidence="6" ref="2 3">
    <original>F</original>
    <variation>C</variation>
    <location>
        <position position="675"/>
    </location>
</feature>
<feature type="helix" evidence="9">
    <location>
        <begin position="8"/>
        <end position="15"/>
    </location>
</feature>
<feature type="helix" evidence="9">
    <location>
        <begin position="17"/>
        <end position="27"/>
    </location>
</feature>
<feature type="helix" evidence="9">
    <location>
        <begin position="29"/>
        <end position="37"/>
    </location>
</feature>
<feature type="strand" evidence="7">
    <location>
        <begin position="47"/>
        <end position="49"/>
    </location>
</feature>
<feature type="helix" evidence="9">
    <location>
        <begin position="54"/>
        <end position="65"/>
    </location>
</feature>
<feature type="helix" evidence="9">
    <location>
        <begin position="74"/>
        <end position="89"/>
    </location>
</feature>
<feature type="strand" evidence="9">
    <location>
        <begin position="91"/>
        <end position="102"/>
    </location>
</feature>
<feature type="strand" evidence="9">
    <location>
        <begin position="105"/>
        <end position="115"/>
    </location>
</feature>
<feature type="helix" evidence="9">
    <location>
        <begin position="121"/>
        <end position="124"/>
    </location>
</feature>
<feature type="helix" evidence="9">
    <location>
        <begin position="128"/>
        <end position="130"/>
    </location>
</feature>
<feature type="strand" evidence="9">
    <location>
        <begin position="132"/>
        <end position="135"/>
    </location>
</feature>
<feature type="strand" evidence="7">
    <location>
        <begin position="136"/>
        <end position="138"/>
    </location>
</feature>
<feature type="helix" evidence="9">
    <location>
        <begin position="140"/>
        <end position="147"/>
    </location>
</feature>
<feature type="strand" evidence="9">
    <location>
        <begin position="151"/>
        <end position="153"/>
    </location>
</feature>
<feature type="turn" evidence="8">
    <location>
        <begin position="156"/>
        <end position="158"/>
    </location>
</feature>
<feature type="strand" evidence="9">
    <location>
        <begin position="159"/>
        <end position="161"/>
    </location>
</feature>
<feature type="helix" evidence="9">
    <location>
        <begin position="165"/>
        <end position="169"/>
    </location>
</feature>
<feature type="strand" evidence="9">
    <location>
        <begin position="177"/>
        <end position="184"/>
    </location>
</feature>
<feature type="strand" evidence="9">
    <location>
        <begin position="187"/>
        <end position="197"/>
    </location>
</feature>
<feature type="strand" evidence="8">
    <location>
        <begin position="198"/>
        <end position="202"/>
    </location>
</feature>
<feature type="helix" evidence="9">
    <location>
        <begin position="205"/>
        <end position="248"/>
    </location>
</feature>
<feature type="helix" evidence="9">
    <location>
        <begin position="255"/>
        <end position="265"/>
    </location>
</feature>
<feature type="helix" evidence="9">
    <location>
        <begin position="267"/>
        <end position="270"/>
    </location>
</feature>
<feature type="strand" evidence="9">
    <location>
        <begin position="272"/>
        <end position="280"/>
    </location>
</feature>
<feature type="helix" evidence="9">
    <location>
        <begin position="288"/>
        <end position="295"/>
    </location>
</feature>
<feature type="strand" evidence="9">
    <location>
        <begin position="315"/>
        <end position="322"/>
    </location>
</feature>
<feature type="strand" evidence="9">
    <location>
        <begin position="324"/>
        <end position="326"/>
    </location>
</feature>
<feature type="strand" evidence="9">
    <location>
        <begin position="328"/>
        <end position="334"/>
    </location>
</feature>
<feature type="turn" evidence="9">
    <location>
        <begin position="340"/>
        <end position="344"/>
    </location>
</feature>
<feature type="helix" evidence="9">
    <location>
        <begin position="346"/>
        <end position="353"/>
    </location>
</feature>
<feature type="strand" evidence="9">
    <location>
        <begin position="356"/>
        <end position="361"/>
    </location>
</feature>
<feature type="helix" evidence="9">
    <location>
        <begin position="362"/>
        <end position="364"/>
    </location>
</feature>
<feature type="strand" evidence="9">
    <location>
        <begin position="366"/>
        <end position="368"/>
    </location>
</feature>
<feature type="strand" evidence="8">
    <location>
        <begin position="375"/>
        <end position="378"/>
    </location>
</feature>
<feature type="strand" evidence="9">
    <location>
        <begin position="384"/>
        <end position="391"/>
    </location>
</feature>
<feature type="strand" evidence="8">
    <location>
        <begin position="393"/>
        <end position="395"/>
    </location>
</feature>
<feature type="strand" evidence="9">
    <location>
        <begin position="397"/>
        <end position="403"/>
    </location>
</feature>
<feature type="strand" evidence="10">
    <location>
        <begin position="405"/>
        <end position="409"/>
    </location>
</feature>
<feature type="helix" evidence="9">
    <location>
        <begin position="414"/>
        <end position="429"/>
    </location>
</feature>
<feature type="helix" evidence="9">
    <location>
        <begin position="432"/>
        <end position="458"/>
    </location>
</feature>
<feature type="helix" evidence="9">
    <location>
        <begin position="462"/>
        <end position="465"/>
    </location>
</feature>
<feature type="turn" evidence="9">
    <location>
        <begin position="466"/>
        <end position="468"/>
    </location>
</feature>
<feature type="helix" evidence="9">
    <location>
        <begin position="471"/>
        <end position="474"/>
    </location>
</feature>
<feature type="strand" evidence="11">
    <location>
        <begin position="475"/>
        <end position="477"/>
    </location>
</feature>
<feature type="turn" evidence="9">
    <location>
        <begin position="479"/>
        <end position="481"/>
    </location>
</feature>
<feature type="helix" evidence="9">
    <location>
        <begin position="484"/>
        <end position="494"/>
    </location>
</feature>
<feature type="helix" evidence="9">
    <location>
        <begin position="498"/>
        <end position="501"/>
    </location>
</feature>
<feature type="turn" evidence="9">
    <location>
        <begin position="502"/>
        <end position="504"/>
    </location>
</feature>
<feature type="strand" evidence="11">
    <location>
        <begin position="511"/>
        <end position="513"/>
    </location>
</feature>
<feature type="helix" evidence="9">
    <location>
        <begin position="515"/>
        <end position="528"/>
    </location>
</feature>
<feature type="helix" evidence="9">
    <location>
        <begin position="531"/>
        <end position="534"/>
    </location>
</feature>
<feature type="helix" evidence="9">
    <location>
        <begin position="539"/>
        <end position="552"/>
    </location>
</feature>
<feature type="strand" evidence="9">
    <location>
        <begin position="557"/>
        <end position="560"/>
    </location>
</feature>
<feature type="helix" evidence="9">
    <location>
        <begin position="561"/>
        <end position="576"/>
    </location>
</feature>
<feature type="helix" evidence="9">
    <location>
        <begin position="580"/>
        <end position="583"/>
    </location>
</feature>
<feature type="helix" evidence="9">
    <location>
        <begin position="586"/>
        <end position="597"/>
    </location>
</feature>
<feature type="turn" evidence="9">
    <location>
        <begin position="598"/>
        <end position="602"/>
    </location>
</feature>
<feature type="helix" evidence="9">
    <location>
        <begin position="608"/>
        <end position="614"/>
    </location>
</feature>
<feature type="helix" evidence="9">
    <location>
        <begin position="617"/>
        <end position="621"/>
    </location>
</feature>
<feature type="strand" evidence="9">
    <location>
        <begin position="623"/>
        <end position="625"/>
    </location>
</feature>
<feature type="helix" evidence="9">
    <location>
        <begin position="627"/>
        <end position="640"/>
    </location>
</feature>
<feature type="helix" evidence="9">
    <location>
        <begin position="642"/>
        <end position="644"/>
    </location>
</feature>
<feature type="helix" evidence="9">
    <location>
        <begin position="646"/>
        <end position="649"/>
    </location>
</feature>
<feature type="helix" evidence="9">
    <location>
        <begin position="652"/>
        <end position="668"/>
    </location>
</feature>
<feature type="helix" evidence="9">
    <location>
        <begin position="671"/>
        <end position="687"/>
    </location>
</feature>
<feature type="helix" evidence="9">
    <location>
        <begin position="688"/>
        <end position="690"/>
    </location>
</feature>
<feature type="strand" evidence="9">
    <location>
        <begin position="691"/>
        <end position="693"/>
    </location>
</feature>
<feature type="helix" evidence="9">
    <location>
        <begin position="694"/>
        <end position="703"/>
    </location>
</feature>
<feature type="helix" evidence="9">
    <location>
        <begin position="706"/>
        <end position="720"/>
    </location>
</feature>
<feature type="helix" evidence="9">
    <location>
        <begin position="722"/>
        <end position="725"/>
    </location>
</feature>
<feature type="helix" evidence="9">
    <location>
        <begin position="728"/>
        <end position="734"/>
    </location>
</feature>
<feature type="turn" evidence="9">
    <location>
        <begin position="735"/>
        <end position="737"/>
    </location>
</feature>
<feature type="helix" evidence="9">
    <location>
        <begin position="739"/>
        <end position="753"/>
    </location>
</feature>
<feature type="turn" evidence="9">
    <location>
        <begin position="759"/>
        <end position="761"/>
    </location>
</feature>
<feature type="helix" evidence="9">
    <location>
        <begin position="766"/>
        <end position="768"/>
    </location>
</feature>
<feature type="helix" evidence="9">
    <location>
        <begin position="769"/>
        <end position="777"/>
    </location>
</feature>
<feature type="turn" evidence="9">
    <location>
        <begin position="778"/>
        <end position="780"/>
    </location>
</feature>
<feature type="helix" evidence="9">
    <location>
        <begin position="781"/>
        <end position="791"/>
    </location>
</feature>
<feature type="helix" evidence="9">
    <location>
        <begin position="793"/>
        <end position="795"/>
    </location>
</feature>
<feature type="helix" evidence="9">
    <location>
        <begin position="796"/>
        <end position="816"/>
    </location>
</feature>
<feature type="turn" evidence="11">
    <location>
        <begin position="826"/>
        <end position="829"/>
    </location>
</feature>
<accession>P11541</accession>
<comment type="function">
    <text evidence="2">Rod-specific cGMP phosphodiesterase that catalyzes the hydrolysis of 3',5'-cyclic GMP. This protein participates in processes of transmission and amplification of the visual signal.</text>
</comment>
<comment type="catalytic activity">
    <reaction evidence="2">
        <text>3',5'-cyclic GMP + H2O = GMP + H(+)</text>
        <dbReference type="Rhea" id="RHEA:16957"/>
        <dbReference type="ChEBI" id="CHEBI:15377"/>
        <dbReference type="ChEBI" id="CHEBI:15378"/>
        <dbReference type="ChEBI" id="CHEBI:57746"/>
        <dbReference type="ChEBI" id="CHEBI:58115"/>
        <dbReference type="EC" id="3.1.4.35"/>
    </reaction>
    <physiologicalReaction direction="left-to-right" evidence="2">
        <dbReference type="Rhea" id="RHEA:16958"/>
    </physiologicalReaction>
</comment>
<comment type="cofactor">
    <cofactor evidence="1">
        <name>a divalent metal cation</name>
        <dbReference type="ChEBI" id="CHEBI:60240"/>
    </cofactor>
    <text evidence="1">Binds 2 divalent metal cations per subunit. Site 1 may preferentially bind zinc ions, while site 2 has a preference for magnesium and/or manganese ions.</text>
</comment>
<comment type="subunit">
    <text>Oligomer composed of two catalytic chains (alpha and beta), an inhibitory chain (gamma) and the delta chain.</text>
</comment>
<comment type="subcellular location">
    <subcellularLocation>
        <location evidence="2">Cell membrane</location>
        <topology evidence="2">Lipid-anchor</topology>
        <orientation evidence="2">Cytoplasmic side</orientation>
    </subcellularLocation>
    <subcellularLocation>
        <location evidence="2">Cell projection</location>
        <location evidence="2">Cilium</location>
        <location evidence="2">Photoreceptor outer segment</location>
    </subcellularLocation>
</comment>
<comment type="similarity">
    <text evidence="6">Belongs to the cyclic nucleotide phosphodiesterase family.</text>
</comment>
<keyword id="KW-0002">3D-structure</keyword>
<keyword id="KW-0007">Acetylation</keyword>
<keyword id="KW-1003">Cell membrane</keyword>
<keyword id="KW-0966">Cell projection</keyword>
<keyword id="KW-0140">cGMP</keyword>
<keyword id="KW-0903">Direct protein sequencing</keyword>
<keyword id="KW-0378">Hydrolase</keyword>
<keyword id="KW-0449">Lipoprotein</keyword>
<keyword id="KW-0472">Membrane</keyword>
<keyword id="KW-0479">Metal-binding</keyword>
<keyword id="KW-0488">Methylation</keyword>
<keyword id="KW-0636">Prenylation</keyword>
<keyword id="KW-1185">Reference proteome</keyword>
<keyword id="KW-0677">Repeat</keyword>
<keyword id="KW-0716">Sensory transduction</keyword>
<keyword id="KW-0844">Vision</keyword>
<protein>
    <recommendedName>
        <fullName evidence="2">Rod cGMP-specific 3',5'-cyclic phosphodiesterase subunit alpha</fullName>
        <shortName>GMP-PDE alpha</shortName>
        <ecNumber evidence="2">3.1.4.35</ecNumber>
    </recommendedName>
    <alternativeName>
        <fullName>PDE V-B1</fullName>
    </alternativeName>
</protein>
<gene>
    <name evidence="2" type="primary">PDE6A</name>
    <name type="synonym">PDEA</name>
</gene>
<proteinExistence type="evidence at protein level"/>
<name>PDE6A_BOVIN</name>
<reference key="1">
    <citation type="journal article" date="1990" name="Genomics">
        <title>Molecular characterization of human and bovine rod photoreceptor cGMP phosphodiesterase alpha-subunit and chromosomal localization of the human gene.</title>
        <authorList>
            <person name="Pittler S.J."/>
            <person name="Baehr W."/>
            <person name="Wasmuth J.J."/>
            <person name="McConnell D.G."/>
            <person name="Champagne M.S."/>
            <person name="VanTuinen P."/>
            <person name="Ledbetter D."/>
            <person name="Davis R.L."/>
        </authorList>
    </citation>
    <scope>NUCLEOTIDE SEQUENCE [MRNA]</scope>
</reference>
<reference key="2">
    <citation type="journal article" date="1987" name="Dokl. Akad. Nauk SSSR">
        <title>Cyclic GMP phosphodiesterase from the bovine retina. Amino acid sequence of the alpha-subunit and nucleotide sequence of corresponding cDNA.</title>
        <authorList>
            <person name="Yu A."/>
            <person name="Ovchinnikov A."/>
            <person name="Gubanov V.V."/>
            <person name="Khramtsov N.V."/>
            <person name="Akhmedov N.B."/>
            <person name="Ishchenko K.A."/>
            <person name="Zagranichnyi V.E."/>
            <person name="Vasilevskaya I.A."/>
            <person name="Rakitina T.V."/>
            <person name="Atabekova N.V."/>
            <person name="Barinov A.A."/>
            <person name="Muradov K.G."/>
            <person name="Shuvaeva T.M."/>
            <person name="Bystrov N.S."/>
            <person name="Severtsova I.V."/>
            <person name="Lipkin V.M."/>
        </authorList>
    </citation>
    <scope>NUCLEOTIDE SEQUENCE [MRNA]</scope>
    <source>
        <tissue>Retina</tissue>
    </source>
</reference>
<reference key="3">
    <citation type="journal article" date="1987" name="FEBS Lett.">
        <title>Cyclic GMP phosphodiesterase from bovine retina. Amino acid sequence of the alpha-subunit and nucleotide sequence of the corresponding cDNA.</title>
        <authorList>
            <person name="Ovchinnikov Y.A."/>
            <person name="Gubanov V.V."/>
            <person name="Khramtsov N.V."/>
            <person name="Ischenko K.A."/>
            <person name="Zagranichny V.E."/>
            <person name="Muradov K.G."/>
            <person name="Shuvaeva T.M."/>
            <person name="Lipkin V.M."/>
        </authorList>
    </citation>
    <scope>NUCLEOTIDE SEQUENCE [MRNA]</scope>
    <scope>PARTIAL PROTEIN SEQUENCE</scope>
    <scope>ACETYLATION AT GLY-2</scope>
    <source>
        <tissue>Retina</tissue>
    </source>
</reference>
<evidence type="ECO:0000250" key="1"/>
<evidence type="ECO:0000250" key="2">
    <source>
        <dbReference type="UniProtKB" id="P16499"/>
    </source>
</evidence>
<evidence type="ECO:0000255" key="3">
    <source>
        <dbReference type="PROSITE-ProRule" id="PRU01192"/>
    </source>
</evidence>
<evidence type="ECO:0000256" key="4">
    <source>
        <dbReference type="SAM" id="MobiDB-lite"/>
    </source>
</evidence>
<evidence type="ECO:0000269" key="5">
    <source>
    </source>
</evidence>
<evidence type="ECO:0000305" key="6"/>
<evidence type="ECO:0007829" key="7">
    <source>
        <dbReference type="PDB" id="6MZB"/>
    </source>
</evidence>
<evidence type="ECO:0007829" key="8">
    <source>
        <dbReference type="PDB" id="7JSN"/>
    </source>
</evidence>
<evidence type="ECO:0007829" key="9">
    <source>
        <dbReference type="PDB" id="8UGB"/>
    </source>
</evidence>
<evidence type="ECO:0007829" key="10">
    <source>
        <dbReference type="PDB" id="8UGS"/>
    </source>
</evidence>
<evidence type="ECO:0007829" key="11">
    <source>
        <dbReference type="PDB" id="8ULG"/>
    </source>
</evidence>
<sequence length="859" mass="99341">MGEVTAEEVEKFLDSNVSFAKQYYNLRYRAKVISDLLGPREAAVDFSNYHALNSVEESEIIFDLLRDFQDNLQAEKCVFNVMKKLCFLLQADRMSLFMYRARNGIAELATRLFNVHKDAVLEECLVAPDSEIVFPLDMGVVGHVALSKKIVNVPNTEEDEHFCDFVDTLTEYQTKNILASPIMNGKDVVAIIMVVNKVDGPHFTENDEEILLKYLNFANLIMKVFHLSYLHNCETRRGQILLWSGSKVFEELTDIERQFHKALYTVRAFLNCDRYSVGLLDMTKQKEFFDVWPVLMGEAPPYAGPRTPDGREINFYKVIDYILHGKEDIKVIPNPPPDHWALVSGLPTYVAQNGLICNIMNAPSEDFFAFQKEPLDESGWMIKNVLSMPIVNKKEEIVGVATFYNRKDGKPFDEMDETLMESLTQFLGWSVLNPDTYELMNKLENRKDIFQDMVKYHVKCDNEEIQTILKTREVYGKEPWECEEEELAEILQGELPDADKYEINKFHFSDLPLTELELVKCGIQMYYELKVVDKFHIPQEALVRFMYSLSKGYRRITYHNWRHGFNVGQTMFSLLVTGKLKRYFTDLEALAMVTAAFCHDIDHRGTNNLYQMKSQNPLAKLHGSSILERHHLEFGKTLLRDESLNIFQNLNRRQHEHAIHMMDIAIIATDLALYFKKRTMFQKIVDQSKTYETQQEWTQYMMLDQTRKEIVMAMMMTACDLSAITKPWEVQSKVALLVAAEFWEQGDLERTVLQQNPIPMMDRNKADELPKLQVGFIDFVCTFVYKEFSRFHEEITPMLDGITNNRKEWKALADEYETKMKGLEEEKQKQQAANQAAAGSQHGGKQPGGGPASKSCCVQ</sequence>
<organism>
    <name type="scientific">Bos taurus</name>
    <name type="common">Bovine</name>
    <dbReference type="NCBI Taxonomy" id="9913"/>
    <lineage>
        <taxon>Eukaryota</taxon>
        <taxon>Metazoa</taxon>
        <taxon>Chordata</taxon>
        <taxon>Craniata</taxon>
        <taxon>Vertebrata</taxon>
        <taxon>Euteleostomi</taxon>
        <taxon>Mammalia</taxon>
        <taxon>Eutheria</taxon>
        <taxon>Laurasiatheria</taxon>
        <taxon>Artiodactyla</taxon>
        <taxon>Ruminantia</taxon>
        <taxon>Pecora</taxon>
        <taxon>Bovidae</taxon>
        <taxon>Bovinae</taxon>
        <taxon>Bos</taxon>
    </lineage>
</organism>